<reference key="1">
    <citation type="journal article" date="1994" name="Yeast">
        <title>The sequence of a 36 kb segment on the left arm of yeast chromosome X identifies 24 open reading frames including NUC1, PRP21 (SPP91), CDC6, CRY2, the gene for S24, a homologue to the aconitase gene ACO1 and two homologues to chromosome III genes.</title>
        <authorList>
            <person name="Purnelle B."/>
            <person name="Coster F."/>
            <person name="Goffeau A."/>
        </authorList>
    </citation>
    <scope>NUCLEOTIDE SEQUENCE [GENOMIC DNA]</scope>
    <source>
        <strain>ATCC 204508 / S288c</strain>
    </source>
</reference>
<reference key="2">
    <citation type="journal article" date="1996" name="EMBO J.">
        <title>Complete nucleotide sequence of Saccharomyces cerevisiae chromosome X.</title>
        <authorList>
            <person name="Galibert F."/>
            <person name="Alexandraki D."/>
            <person name="Baur A."/>
            <person name="Boles E."/>
            <person name="Chalwatzis N."/>
            <person name="Chuat J.-C."/>
            <person name="Coster F."/>
            <person name="Cziepluch C."/>
            <person name="de Haan M."/>
            <person name="Domdey H."/>
            <person name="Durand P."/>
            <person name="Entian K.-D."/>
            <person name="Gatius M."/>
            <person name="Goffeau A."/>
            <person name="Grivell L.A."/>
            <person name="Hennemann A."/>
            <person name="Herbert C.J."/>
            <person name="Heumann K."/>
            <person name="Hilger F."/>
            <person name="Hollenberg C.P."/>
            <person name="Huang M.-E."/>
            <person name="Jacq C."/>
            <person name="Jauniaux J.-C."/>
            <person name="Katsoulou C."/>
            <person name="Kirchrath L."/>
            <person name="Kleine K."/>
            <person name="Kordes E."/>
            <person name="Koetter P."/>
            <person name="Liebl S."/>
            <person name="Louis E.J."/>
            <person name="Manus V."/>
            <person name="Mewes H.-W."/>
            <person name="Miosga T."/>
            <person name="Obermaier B."/>
            <person name="Perea J."/>
            <person name="Pohl T.M."/>
            <person name="Portetelle D."/>
            <person name="Pujol A."/>
            <person name="Purnelle B."/>
            <person name="Ramezani Rad M."/>
            <person name="Rasmussen S.W."/>
            <person name="Rose M."/>
            <person name="Rossau R."/>
            <person name="Schaaff-Gerstenschlaeger I."/>
            <person name="Smits P.H.M."/>
            <person name="Scarcez T."/>
            <person name="Soriano N."/>
            <person name="To Van D."/>
            <person name="Tzermia M."/>
            <person name="Van Broekhoven A."/>
            <person name="Vandenbol M."/>
            <person name="Wedler H."/>
            <person name="von Wettstein D."/>
            <person name="Wambutt R."/>
            <person name="Zagulski M."/>
            <person name="Zollner A."/>
            <person name="Karpfinger-Hartl L."/>
        </authorList>
    </citation>
    <scope>NUCLEOTIDE SEQUENCE [LARGE SCALE GENOMIC DNA]</scope>
    <source>
        <strain>ATCC 204508 / S288c</strain>
    </source>
</reference>
<reference key="3">
    <citation type="journal article" date="2014" name="G3 (Bethesda)">
        <title>The reference genome sequence of Saccharomyces cerevisiae: Then and now.</title>
        <authorList>
            <person name="Engel S.R."/>
            <person name="Dietrich F.S."/>
            <person name="Fisk D.G."/>
            <person name="Binkley G."/>
            <person name="Balakrishnan R."/>
            <person name="Costanzo M.C."/>
            <person name="Dwight S.S."/>
            <person name="Hitz B.C."/>
            <person name="Karra K."/>
            <person name="Nash R.S."/>
            <person name="Weng S."/>
            <person name="Wong E.D."/>
            <person name="Lloyd P."/>
            <person name="Skrzypek M.S."/>
            <person name="Miyasato S.R."/>
            <person name="Simison M."/>
            <person name="Cherry J.M."/>
        </authorList>
    </citation>
    <scope>GENOME REANNOTATION</scope>
    <source>
        <strain>ATCC 204508 / S288c</strain>
    </source>
</reference>
<reference key="4">
    <citation type="journal article" date="2002" name="Genome Res.">
        <title>Parallel identification of new genes in Saccharomyces cerevisiae.</title>
        <authorList>
            <person name="Oshiro G."/>
            <person name="Wodicka L.M."/>
            <person name="Washburn M.P."/>
            <person name="Yates J.R. III"/>
            <person name="Lockhart D.J."/>
            <person name="Winzeler E.A."/>
        </authorList>
    </citation>
    <scope>IDENTIFICATION BY MASS SPECTROMETRY</scope>
</reference>
<feature type="chain" id="PRO_0000309038" description="Uncharacterized protein YJL197C-A">
    <location>
        <begin position="1"/>
        <end position="93"/>
    </location>
</feature>
<gene>
    <name type="ordered locus">YJL197C-A</name>
</gene>
<sequence>MEKKDLSLSVTLIDVYCSISLYCSNSTSGYFSTNNGKASAKSVRFPTGSGNGIYPPLKWTNLFCNFILIAPGLFNSSSFNVIKKGTPNNIAFL</sequence>
<name>YJ197_YEAST</name>
<accession>P0C5P0</accession>
<protein>
    <recommendedName>
        <fullName>Uncharacterized protein YJL197C-A</fullName>
    </recommendedName>
</protein>
<keyword id="KW-1185">Reference proteome</keyword>
<dbReference type="EMBL" id="X77688">
    <property type="status" value="NOT_ANNOTATED_CDS"/>
    <property type="molecule type" value="Genomic_DNA"/>
</dbReference>
<dbReference type="EMBL" id="Z49472">
    <property type="status" value="NOT_ANNOTATED_CDS"/>
    <property type="molecule type" value="Genomic_DNA"/>
</dbReference>
<dbReference type="EMBL" id="BK006943">
    <property type="status" value="NOT_ANNOTATED_CDS"/>
    <property type="molecule type" value="Genomic_DNA"/>
</dbReference>
<dbReference type="STRING" id="4932.YJL197C-A"/>
<dbReference type="PaxDb" id="4932-YJL197C-A"/>
<dbReference type="EnsemblFungi" id="YJL197C-A_mRNA">
    <property type="protein sequence ID" value="YJL197C-A"/>
    <property type="gene ID" value="YJL197C-A"/>
</dbReference>
<dbReference type="AGR" id="SGD:S000028839"/>
<dbReference type="SGD" id="S000028839">
    <property type="gene designation" value="YJL197C-A"/>
</dbReference>
<dbReference type="HOGENOM" id="CLU_2401366_0_0_1"/>
<dbReference type="InParanoid" id="P0C5P0"/>
<dbReference type="PRO" id="PR:P0C5P0"/>
<dbReference type="Proteomes" id="UP000002311">
    <property type="component" value="Chromosome X"/>
</dbReference>
<dbReference type="RNAct" id="P0C5P0">
    <property type="molecule type" value="protein"/>
</dbReference>
<proteinExistence type="evidence at protein level"/>
<organism>
    <name type="scientific">Saccharomyces cerevisiae (strain ATCC 204508 / S288c)</name>
    <name type="common">Baker's yeast</name>
    <dbReference type="NCBI Taxonomy" id="559292"/>
    <lineage>
        <taxon>Eukaryota</taxon>
        <taxon>Fungi</taxon>
        <taxon>Dikarya</taxon>
        <taxon>Ascomycota</taxon>
        <taxon>Saccharomycotina</taxon>
        <taxon>Saccharomycetes</taxon>
        <taxon>Saccharomycetales</taxon>
        <taxon>Saccharomycetaceae</taxon>
        <taxon>Saccharomyces</taxon>
    </lineage>
</organism>